<dbReference type="EMBL" id="AY788913">
    <property type="protein sequence ID" value="AAV54185.1"/>
    <property type="molecule type" value="mRNA"/>
</dbReference>
<dbReference type="RefSeq" id="NP_001007521.1">
    <property type="nucleotide sequence ID" value="NM_001007520.1"/>
</dbReference>
<dbReference type="SMR" id="Q5S1V9"/>
<dbReference type="FunCoup" id="Q5S1V9">
    <property type="interactions" value="8"/>
</dbReference>
<dbReference type="STRING" id="9823.ENSSSCP00000051345"/>
<dbReference type="GlyCosmos" id="Q5S1V9">
    <property type="glycosylation" value="1 site, No reported glycans"/>
</dbReference>
<dbReference type="GlyGen" id="Q5S1V9">
    <property type="glycosylation" value="1 site"/>
</dbReference>
<dbReference type="GeneID" id="493187"/>
<dbReference type="KEGG" id="ssc:493187"/>
<dbReference type="CTD" id="246778"/>
<dbReference type="InParanoid" id="Q5S1V9"/>
<dbReference type="OrthoDB" id="9446539at2759"/>
<dbReference type="Proteomes" id="UP000008227">
    <property type="component" value="Unplaced"/>
</dbReference>
<dbReference type="Proteomes" id="UP000314985">
    <property type="component" value="Unplaced"/>
</dbReference>
<dbReference type="Proteomes" id="UP000694570">
    <property type="component" value="Unplaced"/>
</dbReference>
<dbReference type="Proteomes" id="UP000694571">
    <property type="component" value="Unplaced"/>
</dbReference>
<dbReference type="Proteomes" id="UP000694720">
    <property type="component" value="Unplaced"/>
</dbReference>
<dbReference type="Proteomes" id="UP000694722">
    <property type="component" value="Unplaced"/>
</dbReference>
<dbReference type="Proteomes" id="UP000694723">
    <property type="component" value="Unplaced"/>
</dbReference>
<dbReference type="Proteomes" id="UP000694724">
    <property type="component" value="Unplaced"/>
</dbReference>
<dbReference type="Proteomes" id="UP000694725">
    <property type="component" value="Unplaced"/>
</dbReference>
<dbReference type="Proteomes" id="UP000694726">
    <property type="component" value="Unplaced"/>
</dbReference>
<dbReference type="Proteomes" id="UP000694727">
    <property type="component" value="Unplaced"/>
</dbReference>
<dbReference type="Proteomes" id="UP000694728">
    <property type="component" value="Unplaced"/>
</dbReference>
<dbReference type="GO" id="GO:0005615">
    <property type="term" value="C:extracellular space"/>
    <property type="evidence" value="ECO:0000318"/>
    <property type="project" value="GO_Central"/>
</dbReference>
<dbReference type="GO" id="GO:0005125">
    <property type="term" value="F:cytokine activity"/>
    <property type="evidence" value="ECO:0007669"/>
    <property type="project" value="UniProtKB-KW"/>
</dbReference>
<dbReference type="GO" id="GO:0045523">
    <property type="term" value="F:interleukin-27 receptor binding"/>
    <property type="evidence" value="ECO:0000318"/>
    <property type="project" value="GO_Central"/>
</dbReference>
<dbReference type="GO" id="GO:0006954">
    <property type="term" value="P:inflammatory response"/>
    <property type="evidence" value="ECO:0007669"/>
    <property type="project" value="UniProtKB-KW"/>
</dbReference>
<dbReference type="GO" id="GO:0045087">
    <property type="term" value="P:innate immune response"/>
    <property type="evidence" value="ECO:0007669"/>
    <property type="project" value="UniProtKB-KW"/>
</dbReference>
<dbReference type="GO" id="GO:0042129">
    <property type="term" value="P:regulation of T cell proliferation"/>
    <property type="evidence" value="ECO:0000318"/>
    <property type="project" value="GO_Central"/>
</dbReference>
<dbReference type="GO" id="GO:0045625">
    <property type="term" value="P:regulation of T-helper 1 cell differentiation"/>
    <property type="evidence" value="ECO:0000318"/>
    <property type="project" value="GO_Central"/>
</dbReference>
<dbReference type="FunFam" id="1.20.1250.10:FF:000035">
    <property type="entry name" value="Interleukin-27 subunit alpha"/>
    <property type="match status" value="1"/>
</dbReference>
<dbReference type="Gene3D" id="1.20.1250.10">
    <property type="match status" value="1"/>
</dbReference>
<dbReference type="InterPro" id="IPR009079">
    <property type="entry name" value="4_helix_cytokine-like_core"/>
</dbReference>
<dbReference type="InterPro" id="IPR026207">
    <property type="entry name" value="IL-27_alpha"/>
</dbReference>
<dbReference type="PANTHER" id="PTHR20879">
    <property type="entry name" value="INTERLEUKIN-27 SUBUNIT ALPHA"/>
    <property type="match status" value="1"/>
</dbReference>
<dbReference type="PANTHER" id="PTHR20879:SF1">
    <property type="entry name" value="INTERLEUKIN-27 SUBUNIT ALPHA"/>
    <property type="match status" value="1"/>
</dbReference>
<sequence>MGQMADDLGWRLSLLLLSLLLARAGVWGFPRPPGRPPLSLQELQREFKVSLHLARKLLSEVRVQARHFAESHLPGVNLDLLPLGEQLPNVSLNFQAWRGLSDPERLCFLSMTLRPFHTLLGGLGSQGFWTSSERMQLWAIRLDLRDLQQHLRFQVLAAGFNLPGQEEEENEAGRELLPGAPGGPSKPAAQVSWPRLLYTYQLLHSLELVLSRAMRDFLLLSRAGNPAPALGFPTPSSPP</sequence>
<accession>Q5S1V9</accession>
<protein>
    <recommendedName>
        <fullName>Interleukin-27 subunit alpha</fullName>
        <shortName>IL-27 subunit alpha</shortName>
        <shortName>IL-27-A</shortName>
        <shortName>IL27-A</shortName>
    </recommendedName>
    <alternativeName>
        <fullName>p28</fullName>
    </alternativeName>
</protein>
<reference key="1">
    <citation type="submission" date="2004-10" db="EMBL/GenBank/DDBJ databases">
        <authorList>
            <person name="Peng H."/>
        </authorList>
    </citation>
    <scope>NUCLEOTIDE SEQUENCE [MRNA]</scope>
</reference>
<comment type="function">
    <text evidence="1">Associates with EBI3 to form the IL-27 interleukin, a heterodimeric cytokine which functions in innate immunity. Cytokine with pro- and anti-inflammatory properties, that can regulate T-helper cell development, suppress T-cell proliferation, stimulate cytotoxic T-cell activity, induce isotype switching in B-cells, and that has diverse effects on innate immune cells. Among its target cells are CD4 T-helper cells which can differentiate in type 1 effector cells (TH1), type 2 effector cells (TH2) and IL17 producing helper T-cells (TH17). It drives rapid clonal expansion of naive but not memory CD4 T-cells. It also strongly synergizes with IL-12 to trigger interferon-gamma/IFN-gamma production of naive CD4 T-cells, binds to the cytokine receptor WSX-1/TCCR which appears to be required but not sufficient for IL-27-mediated signal transduction. IL-27 potentiate the early phase of TH1 response and suppress TH2 and TH17 differentiation. It induces the differentiation of TH1 cells via two distinct pathways, p38 MAPK/TBX21- and ICAM1/ITGAL/ERK-dependent pathways. It also induces STAT1, STAT3, STAT4 and STAT5 phosphorylation and activates TBX21/T-Bet via STAT1 with resulting IL12RB2 up-regulation, an event crucial to TH1 cell commitment. It suppresses the expression of GATA3, the inhibitor TH1 cells development. In CD8 T-cells, it activates STATs as well as GZMB. IL-27 reveals to be a potent inhibitor of TH17 cell development and of IL-17 production. Indeed IL27 alone is also able to inhibit the production of IL17 by CD4 and CD8 T-cells. While IL-27 suppressed the development of pro-inflammatory Th17 cells via STAT1, it inhibits the development of anti-inflammatory inducible regulatory T-cells, iTreg, independently of STAT1. IL-27 also has an effect on cytokine production, it suppresses pro-inflammatory cytokine production such as IL2, IL4, IL5 and IL6 and activates suppressors of cytokine signaling such as SOCS1 and SOCS3. Apart from suppression of cytokine production, IL-27 also antagonizes the effects of some cytokines such as IL6 through direct effects on T-cells. Another important role of IL-27 is its antitumor activity as well as its antiangiogenic activity with activation of production of antiangiogenic chemokines such as IP-10/CXCL10 and MIG/CXCL9. In vein endothelial cells, it induces IRF1/interferon regulatory factor 1 and increase the expression of MHC class II transactivator/CIITA with resulting up-regulation of major histocompatibility complex class II (By similarity).</text>
</comment>
<comment type="subunit">
    <text evidence="1">Heterodimer with EBI3; not disulfide-linked. This heterodimer is known as interleukin IL-27 (By similarity).</text>
</comment>
<comment type="subcellular location">
    <subcellularLocation>
        <location evidence="1">Secreted</location>
    </subcellularLocation>
    <text evidence="1">Does not seem to be secreted without coexpression of EBI3.</text>
</comment>
<comment type="PTM">
    <text evidence="1">O-glycosylated.</text>
</comment>
<comment type="similarity">
    <text evidence="4">Belongs to the IL-6 superfamily.</text>
</comment>
<evidence type="ECO:0000250" key="1"/>
<evidence type="ECO:0000255" key="2"/>
<evidence type="ECO:0000256" key="3">
    <source>
        <dbReference type="SAM" id="MobiDB-lite"/>
    </source>
</evidence>
<evidence type="ECO:0000305" key="4"/>
<proteinExistence type="evidence at transcript level"/>
<name>IL27A_PIG</name>
<keyword id="KW-0202">Cytokine</keyword>
<keyword id="KW-0325">Glycoprotein</keyword>
<keyword id="KW-0391">Immunity</keyword>
<keyword id="KW-0395">Inflammatory response</keyword>
<keyword id="KW-0399">Innate immunity</keyword>
<keyword id="KW-1185">Reference proteome</keyword>
<keyword id="KW-0964">Secreted</keyword>
<keyword id="KW-0732">Signal</keyword>
<feature type="signal peptide" evidence="2">
    <location>
        <begin position="1"/>
        <end position="28"/>
    </location>
</feature>
<feature type="chain" id="PRO_0000320141" description="Interleukin-27 subunit alpha">
    <location>
        <begin position="29"/>
        <end position="239"/>
    </location>
</feature>
<feature type="region of interest" description="Disordered" evidence="3">
    <location>
        <begin position="167"/>
        <end position="186"/>
    </location>
</feature>
<feature type="glycosylation site" description="N-linked (GlcNAc...) asparagine" evidence="2">
    <location>
        <position position="89"/>
    </location>
</feature>
<organism>
    <name type="scientific">Sus scrofa</name>
    <name type="common">Pig</name>
    <dbReference type="NCBI Taxonomy" id="9823"/>
    <lineage>
        <taxon>Eukaryota</taxon>
        <taxon>Metazoa</taxon>
        <taxon>Chordata</taxon>
        <taxon>Craniata</taxon>
        <taxon>Vertebrata</taxon>
        <taxon>Euteleostomi</taxon>
        <taxon>Mammalia</taxon>
        <taxon>Eutheria</taxon>
        <taxon>Laurasiatheria</taxon>
        <taxon>Artiodactyla</taxon>
        <taxon>Suina</taxon>
        <taxon>Suidae</taxon>
        <taxon>Sus</taxon>
    </lineage>
</organism>
<gene>
    <name type="primary">IL27</name>
    <name type="synonym">IL27A</name>
</gene>